<sequence>MPTISQLIRHGRQKQKKRTKSPALKSSPQRRGVCTRVMTFTPKKPNSALRKVARVRLTTGIEVTAYIPGEGHNLQEHNVVLIRGGRVKDLPGVRYHIIRGTLDTLGVDKRRNGRSKYGAKRPKA</sequence>
<feature type="chain" id="PRO_0000295992" description="Small ribosomal subunit protein uS12">
    <location>
        <begin position="1"/>
        <end position="124"/>
    </location>
</feature>
<feature type="region of interest" description="Disordered" evidence="3">
    <location>
        <begin position="1"/>
        <end position="32"/>
    </location>
</feature>
<feature type="compositionally biased region" description="Basic residues" evidence="3">
    <location>
        <begin position="9"/>
        <end position="20"/>
    </location>
</feature>
<feature type="modified residue" description="3-methylthioaspartic acid" evidence="1">
    <location>
        <position position="89"/>
    </location>
</feature>
<organism>
    <name type="scientific">Leptospira borgpetersenii serovar Hardjo-bovis (strain JB197)</name>
    <dbReference type="NCBI Taxonomy" id="355277"/>
    <lineage>
        <taxon>Bacteria</taxon>
        <taxon>Pseudomonadati</taxon>
        <taxon>Spirochaetota</taxon>
        <taxon>Spirochaetia</taxon>
        <taxon>Leptospirales</taxon>
        <taxon>Leptospiraceae</taxon>
        <taxon>Leptospira</taxon>
    </lineage>
</organism>
<evidence type="ECO:0000250" key="1"/>
<evidence type="ECO:0000255" key="2">
    <source>
        <dbReference type="HAMAP-Rule" id="MF_00403"/>
    </source>
</evidence>
<evidence type="ECO:0000256" key="3">
    <source>
        <dbReference type="SAM" id="MobiDB-lite"/>
    </source>
</evidence>
<evidence type="ECO:0000305" key="4"/>
<reference key="1">
    <citation type="journal article" date="2006" name="Proc. Natl. Acad. Sci. U.S.A.">
        <title>Genome reduction in Leptospira borgpetersenii reflects limited transmission potential.</title>
        <authorList>
            <person name="Bulach D.M."/>
            <person name="Zuerner R.L."/>
            <person name="Wilson P."/>
            <person name="Seemann T."/>
            <person name="McGrath A."/>
            <person name="Cullen P.A."/>
            <person name="Davis J."/>
            <person name="Johnson M."/>
            <person name="Kuczek E."/>
            <person name="Alt D.P."/>
            <person name="Peterson-Burch B."/>
            <person name="Coppel R.L."/>
            <person name="Rood J.I."/>
            <person name="Davies J.K."/>
            <person name="Adler B."/>
        </authorList>
    </citation>
    <scope>NUCLEOTIDE SEQUENCE [LARGE SCALE GENOMIC DNA]</scope>
    <source>
        <strain>JB197</strain>
    </source>
</reference>
<gene>
    <name evidence="2" type="primary">rpsL</name>
    <name type="ordered locus">LBJ_2363</name>
</gene>
<proteinExistence type="inferred from homology"/>
<comment type="function">
    <text evidence="2">With S4 and S5 plays an important role in translational accuracy.</text>
</comment>
<comment type="function">
    <text evidence="2">Interacts with and stabilizes bases of the 16S rRNA that are involved in tRNA selection in the A site and with the mRNA backbone. Located at the interface of the 30S and 50S subunits, it traverses the body of the 30S subunit contacting proteins on the other side and probably holding the rRNA structure together. The combined cluster of proteins S8, S12 and S17 appears to hold together the shoulder and platform of the 30S subunit.</text>
</comment>
<comment type="subunit">
    <text evidence="2">Part of the 30S ribosomal subunit. Contacts proteins S8 and S17. May interact with IF1 in the 30S initiation complex.</text>
</comment>
<comment type="similarity">
    <text evidence="2">Belongs to the universal ribosomal protein uS12 family.</text>
</comment>
<protein>
    <recommendedName>
        <fullName evidence="2">Small ribosomal subunit protein uS12</fullName>
    </recommendedName>
    <alternativeName>
        <fullName evidence="4">30S ribosomal protein S12</fullName>
    </alternativeName>
</protein>
<accession>Q04QJ1</accession>
<name>RS12_LEPBJ</name>
<keyword id="KW-0488">Methylation</keyword>
<keyword id="KW-0687">Ribonucleoprotein</keyword>
<keyword id="KW-0689">Ribosomal protein</keyword>
<keyword id="KW-0694">RNA-binding</keyword>
<keyword id="KW-0699">rRNA-binding</keyword>
<keyword id="KW-0820">tRNA-binding</keyword>
<dbReference type="EMBL" id="CP000350">
    <property type="protein sequence ID" value="ABJ76829.1"/>
    <property type="molecule type" value="Genomic_DNA"/>
</dbReference>
<dbReference type="RefSeq" id="WP_001142358.1">
    <property type="nucleotide sequence ID" value="NC_008510.1"/>
</dbReference>
<dbReference type="SMR" id="Q04QJ1"/>
<dbReference type="GeneID" id="61172897"/>
<dbReference type="KEGG" id="lbj:LBJ_2363"/>
<dbReference type="HOGENOM" id="CLU_104295_1_2_12"/>
<dbReference type="Proteomes" id="UP000000656">
    <property type="component" value="Chromosome 1"/>
</dbReference>
<dbReference type="GO" id="GO:0015935">
    <property type="term" value="C:small ribosomal subunit"/>
    <property type="evidence" value="ECO:0007669"/>
    <property type="project" value="InterPro"/>
</dbReference>
<dbReference type="GO" id="GO:0019843">
    <property type="term" value="F:rRNA binding"/>
    <property type="evidence" value="ECO:0007669"/>
    <property type="project" value="UniProtKB-UniRule"/>
</dbReference>
<dbReference type="GO" id="GO:0003735">
    <property type="term" value="F:structural constituent of ribosome"/>
    <property type="evidence" value="ECO:0007669"/>
    <property type="project" value="InterPro"/>
</dbReference>
<dbReference type="GO" id="GO:0000049">
    <property type="term" value="F:tRNA binding"/>
    <property type="evidence" value="ECO:0007669"/>
    <property type="project" value="UniProtKB-UniRule"/>
</dbReference>
<dbReference type="GO" id="GO:0006412">
    <property type="term" value="P:translation"/>
    <property type="evidence" value="ECO:0007669"/>
    <property type="project" value="UniProtKB-UniRule"/>
</dbReference>
<dbReference type="CDD" id="cd03368">
    <property type="entry name" value="Ribosomal_S12"/>
    <property type="match status" value="1"/>
</dbReference>
<dbReference type="FunFam" id="2.40.50.140:FF:000001">
    <property type="entry name" value="30S ribosomal protein S12"/>
    <property type="match status" value="1"/>
</dbReference>
<dbReference type="Gene3D" id="2.40.50.140">
    <property type="entry name" value="Nucleic acid-binding proteins"/>
    <property type="match status" value="1"/>
</dbReference>
<dbReference type="HAMAP" id="MF_00403_B">
    <property type="entry name" value="Ribosomal_uS12_B"/>
    <property type="match status" value="1"/>
</dbReference>
<dbReference type="InterPro" id="IPR012340">
    <property type="entry name" value="NA-bd_OB-fold"/>
</dbReference>
<dbReference type="InterPro" id="IPR006032">
    <property type="entry name" value="Ribosomal_uS12"/>
</dbReference>
<dbReference type="InterPro" id="IPR005679">
    <property type="entry name" value="Ribosomal_uS12_bac"/>
</dbReference>
<dbReference type="NCBIfam" id="TIGR00981">
    <property type="entry name" value="rpsL_bact"/>
    <property type="match status" value="1"/>
</dbReference>
<dbReference type="PANTHER" id="PTHR11652">
    <property type="entry name" value="30S RIBOSOMAL PROTEIN S12 FAMILY MEMBER"/>
    <property type="match status" value="1"/>
</dbReference>
<dbReference type="Pfam" id="PF00164">
    <property type="entry name" value="Ribosom_S12_S23"/>
    <property type="match status" value="1"/>
</dbReference>
<dbReference type="PIRSF" id="PIRSF002133">
    <property type="entry name" value="Ribosomal_S12/S23"/>
    <property type="match status" value="1"/>
</dbReference>
<dbReference type="PRINTS" id="PR01034">
    <property type="entry name" value="RIBOSOMALS12"/>
</dbReference>
<dbReference type="SUPFAM" id="SSF50249">
    <property type="entry name" value="Nucleic acid-binding proteins"/>
    <property type="match status" value="1"/>
</dbReference>
<dbReference type="PROSITE" id="PS00055">
    <property type="entry name" value="RIBOSOMAL_S12"/>
    <property type="match status" value="1"/>
</dbReference>